<organism>
    <name type="scientific">Rattus norvegicus</name>
    <name type="common">Rat</name>
    <dbReference type="NCBI Taxonomy" id="10116"/>
    <lineage>
        <taxon>Eukaryota</taxon>
        <taxon>Metazoa</taxon>
        <taxon>Chordata</taxon>
        <taxon>Craniata</taxon>
        <taxon>Vertebrata</taxon>
        <taxon>Euteleostomi</taxon>
        <taxon>Mammalia</taxon>
        <taxon>Eutheria</taxon>
        <taxon>Euarchontoglires</taxon>
        <taxon>Glires</taxon>
        <taxon>Rodentia</taxon>
        <taxon>Myomorpha</taxon>
        <taxon>Muroidea</taxon>
        <taxon>Muridae</taxon>
        <taxon>Murinae</taxon>
        <taxon>Rattus</taxon>
    </lineage>
</organism>
<protein>
    <recommendedName>
        <fullName>Uricase</fullName>
        <ecNumber evidence="5">1.7.3.3</ecNumber>
    </recommendedName>
    <alternativeName>
        <fullName>Urate oxidase</fullName>
    </alternativeName>
</protein>
<keyword id="KW-0007">Acetylation</keyword>
<keyword id="KW-0903">Direct protein sequencing</keyword>
<keyword id="KW-0560">Oxidoreductase</keyword>
<keyword id="KW-0576">Peroxisome</keyword>
<keyword id="KW-0597">Phosphoprotein</keyword>
<keyword id="KW-0659">Purine metabolism</keyword>
<keyword id="KW-1185">Reference proteome</keyword>
<dbReference type="EC" id="1.7.3.3" evidence="5"/>
<dbReference type="EMBL" id="J03959">
    <property type="protein sequence ID" value="AAA42318.1"/>
    <property type="status" value="ALT_FRAME"/>
    <property type="molecule type" value="mRNA"/>
</dbReference>
<dbReference type="EMBL" id="X13098">
    <property type="protein sequence ID" value="CAA31490.1"/>
    <property type="molecule type" value="mRNA"/>
</dbReference>
<dbReference type="EMBL" id="M24396">
    <property type="protein sequence ID" value="AAA42317.1"/>
    <property type="molecule type" value="mRNA"/>
</dbReference>
<dbReference type="EMBL" id="X07497">
    <property type="protein sequence ID" value="CAA30378.1"/>
    <property type="status" value="ALT_FRAME"/>
    <property type="molecule type" value="mRNA"/>
</dbReference>
<dbReference type="EMBL" id="M63593">
    <property type="protein sequence ID" value="AAA61699.1"/>
    <property type="molecule type" value="Genomic_DNA"/>
</dbReference>
<dbReference type="EMBL" id="M63583">
    <property type="protein sequence ID" value="AAA61699.1"/>
    <property type="status" value="JOINED"/>
    <property type="molecule type" value="Genomic_DNA"/>
</dbReference>
<dbReference type="EMBL" id="M63586">
    <property type="protein sequence ID" value="AAA61699.1"/>
    <property type="status" value="JOINED"/>
    <property type="molecule type" value="Genomic_DNA"/>
</dbReference>
<dbReference type="EMBL" id="M63587">
    <property type="protein sequence ID" value="AAA61699.1"/>
    <property type="status" value="JOINED"/>
    <property type="molecule type" value="Genomic_DNA"/>
</dbReference>
<dbReference type="EMBL" id="M63588">
    <property type="protein sequence ID" value="AAA61699.1"/>
    <property type="status" value="JOINED"/>
    <property type="molecule type" value="Genomic_DNA"/>
</dbReference>
<dbReference type="EMBL" id="M63590">
    <property type="protein sequence ID" value="AAA61699.1"/>
    <property type="status" value="JOINED"/>
    <property type="molecule type" value="Genomic_DNA"/>
</dbReference>
<dbReference type="EMBL" id="M63591">
    <property type="protein sequence ID" value="AAA61699.1"/>
    <property type="status" value="JOINED"/>
    <property type="molecule type" value="Genomic_DNA"/>
</dbReference>
<dbReference type="EMBL" id="M63592">
    <property type="protein sequence ID" value="AAA61699.1"/>
    <property type="status" value="JOINED"/>
    <property type="molecule type" value="Genomic_DNA"/>
</dbReference>
<dbReference type="EMBL" id="BC088112">
    <property type="protein sequence ID" value="AAH88112.1"/>
    <property type="molecule type" value="mRNA"/>
</dbReference>
<dbReference type="PIR" id="I54070">
    <property type="entry name" value="RDRTU"/>
</dbReference>
<dbReference type="RefSeq" id="NP_446220.2">
    <property type="nucleotide sequence ID" value="NM_053768.3"/>
</dbReference>
<dbReference type="SMR" id="P09118"/>
<dbReference type="FunCoup" id="P09118">
    <property type="interactions" value="58"/>
</dbReference>
<dbReference type="STRING" id="10116.ENSRNOP00000021970"/>
<dbReference type="CarbonylDB" id="P09118"/>
<dbReference type="iPTMnet" id="P09118"/>
<dbReference type="PhosphoSitePlus" id="P09118"/>
<dbReference type="PaxDb" id="10116-ENSRNOP00000021970"/>
<dbReference type="GeneID" id="114768"/>
<dbReference type="KEGG" id="rno:114768"/>
<dbReference type="AGR" id="RGD:621369"/>
<dbReference type="CTD" id="391051"/>
<dbReference type="RGD" id="621369">
    <property type="gene designation" value="Uox"/>
</dbReference>
<dbReference type="VEuPathDB" id="HostDB:ENSRNOG00000016339"/>
<dbReference type="eggNOG" id="KOG1599">
    <property type="taxonomic scope" value="Eukaryota"/>
</dbReference>
<dbReference type="HOGENOM" id="CLU_048151_1_0_1"/>
<dbReference type="InParanoid" id="P09118"/>
<dbReference type="OrthoDB" id="6557at9989"/>
<dbReference type="PhylomeDB" id="P09118"/>
<dbReference type="TreeFam" id="TF323438"/>
<dbReference type="UniPathway" id="UPA00394">
    <property type="reaction ID" value="UER00650"/>
</dbReference>
<dbReference type="PRO" id="PR:P09118"/>
<dbReference type="Proteomes" id="UP000002494">
    <property type="component" value="Chromosome 2"/>
</dbReference>
<dbReference type="Bgee" id="ENSRNOG00000016339">
    <property type="expression patterns" value="Expressed in liver and 13 other cell types or tissues"/>
</dbReference>
<dbReference type="GO" id="GO:0005782">
    <property type="term" value="C:peroxisomal matrix"/>
    <property type="evidence" value="ECO:0000304"/>
    <property type="project" value="RGD"/>
</dbReference>
<dbReference type="GO" id="GO:0005777">
    <property type="term" value="C:peroxisome"/>
    <property type="evidence" value="ECO:0000314"/>
    <property type="project" value="UniProtKB"/>
</dbReference>
<dbReference type="GO" id="GO:0004846">
    <property type="term" value="F:urate oxidase activity"/>
    <property type="evidence" value="ECO:0000314"/>
    <property type="project" value="UniProtKB"/>
</dbReference>
<dbReference type="GO" id="GO:0006145">
    <property type="term" value="P:purine nucleobase catabolic process"/>
    <property type="evidence" value="ECO:0000318"/>
    <property type="project" value="GO_Central"/>
</dbReference>
<dbReference type="GO" id="GO:0019628">
    <property type="term" value="P:urate catabolic process"/>
    <property type="evidence" value="ECO:0000314"/>
    <property type="project" value="UniProtKB"/>
</dbReference>
<dbReference type="CDD" id="cd00445">
    <property type="entry name" value="Uricase"/>
    <property type="match status" value="1"/>
</dbReference>
<dbReference type="FunFam" id="3.10.270.10:FF:000001">
    <property type="entry name" value="Uricase"/>
    <property type="match status" value="1"/>
</dbReference>
<dbReference type="Gene3D" id="3.10.270.10">
    <property type="entry name" value="Urate Oxidase"/>
    <property type="match status" value="1"/>
</dbReference>
<dbReference type="InterPro" id="IPR002042">
    <property type="entry name" value="Uricase"/>
</dbReference>
<dbReference type="InterPro" id="IPR019842">
    <property type="entry name" value="Uricase_CS"/>
</dbReference>
<dbReference type="NCBIfam" id="TIGR03383">
    <property type="entry name" value="urate_oxi"/>
    <property type="match status" value="1"/>
</dbReference>
<dbReference type="PANTHER" id="PTHR42874">
    <property type="entry name" value="URICASE"/>
    <property type="match status" value="1"/>
</dbReference>
<dbReference type="PANTHER" id="PTHR42874:SF1">
    <property type="entry name" value="URICASE"/>
    <property type="match status" value="1"/>
</dbReference>
<dbReference type="Pfam" id="PF01014">
    <property type="entry name" value="Uricase"/>
    <property type="match status" value="2"/>
</dbReference>
<dbReference type="PIRSF" id="PIRSF000241">
    <property type="entry name" value="Urate_oxidase"/>
    <property type="match status" value="1"/>
</dbReference>
<dbReference type="PRINTS" id="PR00093">
    <property type="entry name" value="URICASE"/>
</dbReference>
<dbReference type="SUPFAM" id="SSF55620">
    <property type="entry name" value="Tetrahydrobiopterin biosynthesis enzymes-like"/>
    <property type="match status" value="2"/>
</dbReference>
<dbReference type="PROSITE" id="PS00366">
    <property type="entry name" value="URICASE"/>
    <property type="match status" value="1"/>
</dbReference>
<evidence type="ECO:0000250" key="1">
    <source>
        <dbReference type="UniProtKB" id="D0VWQ1"/>
    </source>
</evidence>
<evidence type="ECO:0000250" key="2">
    <source>
        <dbReference type="UniProtKB" id="P25688"/>
    </source>
</evidence>
<evidence type="ECO:0000250" key="3">
    <source>
        <dbReference type="UniProtKB" id="Q00511"/>
    </source>
</evidence>
<evidence type="ECO:0000255" key="4"/>
<evidence type="ECO:0000269" key="5">
    <source>
    </source>
</evidence>
<evidence type="ECO:0000269" key="6">
    <source>
    </source>
</evidence>
<evidence type="ECO:0000305" key="7"/>
<evidence type="ECO:0000305" key="8">
    <source>
    </source>
</evidence>
<evidence type="ECO:0007744" key="9">
    <source>
    </source>
</evidence>
<reference key="1">
    <citation type="journal article" date="1990" name="FEBS Lett.">
        <title>Organization of rat uricase chromosomal gene differs greatly from that of the corresponding plant gene.</title>
        <authorList>
            <person name="Motojima K."/>
            <person name="Goto S."/>
        </authorList>
    </citation>
    <scope>NUCLEOTIDE SEQUENCE [MRNA]</scope>
    <source>
        <strain>Sprague-Dawley</strain>
        <tissue>Liver</tissue>
    </source>
</reference>
<reference key="2">
    <citation type="journal article" date="1988" name="J. Biol. Chem.">
        <title>Cloning and sequence analysis of cDNA for rat liver uricase.</title>
        <authorList>
            <person name="Motojima K."/>
            <person name="Kanaya S."/>
            <person name="Goto S."/>
        </authorList>
    </citation>
    <scope>NUCLEOTIDE SEQUENCE [MRNA]</scope>
    <source>
        <strain>Sprague-Dawley</strain>
        <tissue>Liver</tissue>
    </source>
</reference>
<reference key="3">
    <citation type="journal article" date="1989" name="Biochem. Biophys. Res. Commun.">
        <title>The nucleotide sequence of a full length cDNA clone encoding rat liver urate oxidase.</title>
        <authorList>
            <person name="Alvares K."/>
            <person name="Nemali M.R."/>
            <person name="Reddy P.G."/>
            <person name="Wang X.D."/>
            <person name="Rao M.S."/>
            <person name="Reddy J.K."/>
        </authorList>
    </citation>
    <scope>NUCLEOTIDE SEQUENCE [MRNA]</scope>
    <source>
        <tissue>Liver</tissue>
    </source>
</reference>
<reference key="4">
    <citation type="journal article" date="1988" name="Eur. J. Biochem.">
        <title>Nucleotide sequence of cDNA and predicted amino acid sequence of rat liver uricase.</title>
        <authorList>
            <person name="Ito M."/>
            <person name="Suzuki M."/>
            <person name="Takagi Y."/>
        </authorList>
    </citation>
    <scope>NUCLEOTIDE SEQUENCE [MRNA]</scope>
    <scope>PARTIAL PROTEIN SEQUENCE</scope>
    <source>
        <tissue>Liver</tissue>
    </source>
</reference>
<reference key="5">
    <citation type="journal article" date="1991" name="Gene">
        <title>Rat urate oxidase: cloning and structural analysis of the gene and 5'-flanking region.</title>
        <authorList>
            <person name="Wang X.D."/>
            <person name="Kawano H."/>
            <person name="Alvares K."/>
            <person name="Reddy P.G."/>
            <person name="Getto H."/>
            <person name="Rao M.S."/>
            <person name="Reddy J.K."/>
        </authorList>
    </citation>
    <scope>NUCLEOTIDE SEQUENCE [GENOMIC DNA]</scope>
</reference>
<reference key="6">
    <citation type="journal article" date="1991" name="Genomics">
        <title>Structural analysis of the gene encoding rat uricase.</title>
        <authorList>
            <person name="Ito M."/>
            <person name="Nakamura M."/>
            <person name="Ogawa H."/>
            <person name="Kato S."/>
            <person name="Takagi Y."/>
        </authorList>
    </citation>
    <scope>NUCLEOTIDE SEQUENCE [GENOMIC DNA]</scope>
</reference>
<reference key="7">
    <citation type="journal article" date="2004" name="Genome Res.">
        <title>The status, quality, and expansion of the NIH full-length cDNA project: the Mammalian Gene Collection (MGC).</title>
        <authorList>
            <consortium name="The MGC Project Team"/>
        </authorList>
    </citation>
    <scope>NUCLEOTIDE SEQUENCE [LARGE SCALE MRNA]</scope>
    <source>
        <tissue>Liver</tissue>
    </source>
</reference>
<reference key="8">
    <citation type="journal article" date="1988" name="Proc. Natl. Acad. Sci. U.S.A.">
        <title>Isolation and sequence determination of a cDNA clone for rat peroxisomal urate oxidase: liver-specific expression in the rat.</title>
        <authorList>
            <person name="Reddy P.G."/>
            <person name="Nemali M.R."/>
            <person name="Reddy M.K."/>
            <person name="Reddy M.N."/>
            <person name="Yuan P.M."/>
            <person name="Yuen S."/>
            <person name="Laffler T.G."/>
            <person name="Shiroza T."/>
            <person name="Kuramitsu H.K."/>
            <person name="Usuda N."/>
            <person name="Chisholm R.L."/>
            <person name="Rao M.S."/>
            <person name="Reddy J.K."/>
        </authorList>
    </citation>
    <scope>NUCLEOTIDE SEQUENCE [MRNA] OF 11-303</scope>
    <scope>SUBCELLULAR LOCATION</scope>
    <scope>TISSUE SPECIFICITY</scope>
    <source>
        <tissue>Liver</tissue>
    </source>
</reference>
<reference key="9">
    <citation type="journal article" date="1992" name="Biochem. Biophys. Res. Commun.">
        <title>Identification of an amino acid residue involved in the substrate-binding site of rat liver uricase by site-directed mutagenesis.</title>
        <authorList>
            <person name="Ito M."/>
            <person name="Kato S."/>
            <person name="Nakmura M."/>
            <person name="Go M."/>
            <person name="Takagi Y."/>
        </authorList>
    </citation>
    <scope>FUNCTION</scope>
    <scope>CATALYTIC ACTIVITY</scope>
    <scope>ACTIVITY REGULATION</scope>
    <scope>BIOPHYSICOCHEMICAL PROPERTIES</scope>
    <scope>PATHWAY</scope>
    <scope>MUTAGENESIS OF LYS-164</scope>
</reference>
<reference key="10">
    <citation type="journal article" date="2012" name="Nat. Commun.">
        <title>Quantitative maps of protein phosphorylation sites across 14 different rat organs and tissues.</title>
        <authorList>
            <person name="Lundby A."/>
            <person name="Secher A."/>
            <person name="Lage K."/>
            <person name="Nordsborg N.B."/>
            <person name="Dmytriyev A."/>
            <person name="Lundby C."/>
            <person name="Olsen J.V."/>
        </authorList>
    </citation>
    <scope>PHOSPHORYLATION [LARGE SCALE ANALYSIS] AT TYR-288</scope>
    <scope>IDENTIFICATION BY MASS SPECTROMETRY [LARGE SCALE ANALYSIS]</scope>
</reference>
<gene>
    <name type="primary">Uox</name>
</gene>
<comment type="function">
    <text evidence="5">Catalyzes the oxidation of uric acid to 5-hydroxyisourate, which is further processed to form (S)-allantoin.</text>
</comment>
<comment type="catalytic activity">
    <reaction evidence="5">
        <text>urate + O2 + H2O = 5-hydroxyisourate + H2O2</text>
        <dbReference type="Rhea" id="RHEA:21368"/>
        <dbReference type="ChEBI" id="CHEBI:15377"/>
        <dbReference type="ChEBI" id="CHEBI:15379"/>
        <dbReference type="ChEBI" id="CHEBI:16240"/>
        <dbReference type="ChEBI" id="CHEBI:17775"/>
        <dbReference type="ChEBI" id="CHEBI:18072"/>
        <dbReference type="EC" id="1.7.3.3"/>
    </reaction>
</comment>
<comment type="activity regulation">
    <text evidence="5">Competitively inhibited by xanthine.</text>
</comment>
<comment type="biophysicochemical properties">
    <kinetics>
        <KM evidence="5">8.33 uM for urate</KM>
    </kinetics>
</comment>
<comment type="pathway">
    <text evidence="8">Purine metabolism; urate degradation; (S)-allantoin from urate: step 1/3.</text>
</comment>
<comment type="subcellular location">
    <subcellularLocation>
        <location evidence="6">Peroxisome</location>
    </subcellularLocation>
</comment>
<comment type="tissue specificity">
    <text evidence="6">Expressed in liver. Not detected in other tissues tested.</text>
</comment>
<comment type="similarity">
    <text evidence="7">Belongs to the uricase family.</text>
</comment>
<comment type="sequence caution" evidence="7">
    <conflict type="frameshift">
        <sequence resource="EMBL-CDS" id="AAA42318"/>
    </conflict>
</comment>
<comment type="sequence caution" evidence="7">
    <conflict type="frameshift">
        <sequence resource="EMBL-CDS" id="CAA30378"/>
    </conflict>
</comment>
<accession>P09118</accession>
<name>URIC_RAT</name>
<sequence length="303" mass="34934">MAHYHDDYGKNDEVEFVRTGYGKDMVKVLHIQRDGKYHSIKEVATSVQLTLRSKKDYLHGDNSDIIPTDTIKNTVHVLAKFKGIKSIETFAMNICEHFLSSFSHVTRAHVYVEEVPWKRFEKNGVKHVHAFIHTPTGTHFCDVEQVRNGPPIIHSGIKDLKVLKTTQSGFEGFIKDQFTTLPEVKDRCFATQVYCKWRYQNRDVDFEATWGAVRDIVLKKFAGPYDRGEYSPSVQKTLYDIQVLTLSQLPEIEDMEISLPNIHYFNIDMSKMGLINKEEVLLPLDNPYGKITGTVRRKLPSRL</sequence>
<feature type="initiator methionine" description="Removed" evidence="2">
    <location>
        <position position="1"/>
    </location>
</feature>
<feature type="chain" id="PRO_0000165990" description="Uricase">
    <location>
        <begin position="2"/>
        <end position="303"/>
    </location>
</feature>
<feature type="short sequence motif" description="Microbody targeting signal" evidence="4">
    <location>
        <begin position="301"/>
        <end position="303"/>
    </location>
</feature>
<feature type="active site" description="Charge relay system" evidence="1">
    <location>
        <position position="23"/>
    </location>
</feature>
<feature type="active site" description="Charge relay system" evidence="1">
    <location>
        <position position="68"/>
    </location>
</feature>
<feature type="active site" description="Charge relay system" evidence="1">
    <location>
        <position position="263"/>
    </location>
</feature>
<feature type="binding site" evidence="3">
    <location>
        <position position="68"/>
    </location>
    <ligand>
        <name>urate</name>
        <dbReference type="ChEBI" id="CHEBI:17775"/>
    </ligand>
</feature>
<feature type="binding site" evidence="3">
    <location>
        <position position="69"/>
    </location>
    <ligand>
        <name>urate</name>
        <dbReference type="ChEBI" id="CHEBI:17775"/>
    </ligand>
</feature>
<feature type="binding site" evidence="3">
    <location>
        <position position="170"/>
    </location>
    <ligand>
        <name>urate</name>
        <dbReference type="ChEBI" id="CHEBI:17775"/>
    </ligand>
</feature>
<feature type="binding site" evidence="3">
    <location>
        <position position="187"/>
    </location>
    <ligand>
        <name>urate</name>
        <dbReference type="ChEBI" id="CHEBI:17775"/>
    </ligand>
</feature>
<feature type="binding site" evidence="3">
    <location>
        <position position="234"/>
    </location>
    <ligand>
        <name>urate</name>
        <dbReference type="ChEBI" id="CHEBI:17775"/>
    </ligand>
</feature>
<feature type="binding site" evidence="3">
    <location>
        <position position="235"/>
    </location>
    <ligand>
        <name>urate</name>
        <dbReference type="ChEBI" id="CHEBI:17775"/>
    </ligand>
</feature>
<feature type="binding site" evidence="3">
    <location>
        <position position="261"/>
    </location>
    <ligand>
        <name>urate</name>
        <dbReference type="ChEBI" id="CHEBI:17775"/>
    </ligand>
</feature>
<feature type="modified residue" description="N-acetylalanine" evidence="2">
    <location>
        <position position="2"/>
    </location>
</feature>
<feature type="modified residue" description="N6-acetyllysine; alternate" evidence="2">
    <location>
        <position position="10"/>
    </location>
</feature>
<feature type="modified residue" description="N6-succinyllysine; alternate" evidence="2">
    <location>
        <position position="10"/>
    </location>
</feature>
<feature type="modified residue" description="N6-acetyllysine; alternate" evidence="2">
    <location>
        <position position="23"/>
    </location>
</feature>
<feature type="modified residue" description="N6-succinyllysine; alternate" evidence="2">
    <location>
        <position position="23"/>
    </location>
</feature>
<feature type="modified residue" description="N6-acetyllysine" evidence="2">
    <location>
        <position position="27"/>
    </location>
</feature>
<feature type="modified residue" description="N6-acetyllysine" evidence="2">
    <location>
        <position position="36"/>
    </location>
</feature>
<feature type="modified residue" description="Phosphoserine" evidence="2">
    <location>
        <position position="39"/>
    </location>
</feature>
<feature type="modified residue" description="Phosphoserine" evidence="2">
    <location>
        <position position="63"/>
    </location>
</feature>
<feature type="modified residue" description="N6-acetyllysine" evidence="2">
    <location>
        <position position="118"/>
    </location>
</feature>
<feature type="modified residue" description="N6-acetyllysine" evidence="2">
    <location>
        <position position="122"/>
    </location>
</feature>
<feature type="modified residue" description="N6-acetyllysine" evidence="2">
    <location>
        <position position="164"/>
    </location>
</feature>
<feature type="modified residue" description="N6-acetyllysine" evidence="2">
    <location>
        <position position="175"/>
    </location>
</feature>
<feature type="modified residue" description="N6-acetyllysine" evidence="2">
    <location>
        <position position="185"/>
    </location>
</feature>
<feature type="modified residue" description="N6-acetyllysine; alternate" evidence="2">
    <location>
        <position position="220"/>
    </location>
</feature>
<feature type="modified residue" description="N6-succinyllysine; alternate" evidence="2">
    <location>
        <position position="220"/>
    </location>
</feature>
<feature type="modified residue" description="Phosphoserine" evidence="2">
    <location>
        <position position="231"/>
    </location>
</feature>
<feature type="modified residue" description="N6-acetyllysine" evidence="2">
    <location>
        <position position="277"/>
    </location>
</feature>
<feature type="modified residue" description="Phosphotyrosine" evidence="9">
    <location>
        <position position="288"/>
    </location>
</feature>
<feature type="mutagenesis site" description="Loss of activity." evidence="5">
    <original>K</original>
    <variation>E</variation>
    <variation>I</variation>
    <location>
        <position position="164"/>
    </location>
</feature>
<feature type="sequence conflict" description="In Ref. 6." evidence="7" ref="6">
    <original>K</original>
    <variation>D</variation>
    <location>
        <position position="55"/>
    </location>
</feature>
<feature type="sequence conflict" description="In Ref. 3; AAA42317 and 6." evidence="7" ref="3 6">
    <original>Y</original>
    <variation>H</variation>
    <location>
        <position position="111"/>
    </location>
</feature>
<proteinExistence type="evidence at protein level"/>